<name>PPT2_RAT</name>
<proteinExistence type="evidence at transcript level"/>
<dbReference type="EC" id="3.1.2.2" evidence="1"/>
<dbReference type="EMBL" id="AF061971">
    <property type="protein sequence ID" value="AAC16003.1"/>
    <property type="molecule type" value="mRNA"/>
</dbReference>
<dbReference type="EMBL" id="AF067790">
    <property type="protein sequence ID" value="AAC19366.1"/>
    <property type="molecule type" value="mRNA"/>
</dbReference>
<dbReference type="EMBL" id="BX883044">
    <property type="protein sequence ID" value="CAE83963.1"/>
    <property type="molecule type" value="Genomic_DNA"/>
</dbReference>
<dbReference type="EMBL" id="BC062023">
    <property type="protein sequence ID" value="AAH62023.1"/>
    <property type="molecule type" value="mRNA"/>
</dbReference>
<dbReference type="RefSeq" id="NP_062240.1">
    <molecule id="O70489-1"/>
    <property type="nucleotide sequence ID" value="NM_019367.2"/>
</dbReference>
<dbReference type="RefSeq" id="XP_006256079.2">
    <molecule id="O70489-1"/>
    <property type="nucleotide sequence ID" value="XM_006256017.4"/>
</dbReference>
<dbReference type="RefSeq" id="XP_006256080.1">
    <property type="nucleotide sequence ID" value="XM_006256018.3"/>
</dbReference>
<dbReference type="RefSeq" id="XP_006256081.1">
    <molecule id="O70489-1"/>
    <property type="nucleotide sequence ID" value="XM_006256019.4"/>
</dbReference>
<dbReference type="RefSeq" id="XP_006256082.1">
    <molecule id="O70489-1"/>
    <property type="nucleotide sequence ID" value="XM_006256020.5"/>
</dbReference>
<dbReference type="RefSeq" id="XP_006256084.1">
    <molecule id="O70489-1"/>
    <property type="nucleotide sequence ID" value="XM_006256022.5"/>
</dbReference>
<dbReference type="RefSeq" id="XP_006256085.1">
    <molecule id="O70489-1"/>
    <property type="nucleotide sequence ID" value="XM_006256023.4"/>
</dbReference>
<dbReference type="RefSeq" id="XP_008770984.1">
    <molecule id="O70489-1"/>
    <property type="nucleotide sequence ID" value="XM_008772762.4"/>
</dbReference>
<dbReference type="RefSeq" id="XP_017457255.1">
    <property type="nucleotide sequence ID" value="XM_017601766.1"/>
</dbReference>
<dbReference type="RefSeq" id="XP_017457256.1">
    <property type="nucleotide sequence ID" value="XM_017601767.1"/>
</dbReference>
<dbReference type="SMR" id="O70489"/>
<dbReference type="FunCoup" id="O70489">
    <property type="interactions" value="1671"/>
</dbReference>
<dbReference type="STRING" id="10116.ENSRNOP00000000497"/>
<dbReference type="ESTHER" id="ratno-PPT2">
    <property type="family name" value="Palmitoyl-protein_thioesterase"/>
</dbReference>
<dbReference type="GlyCosmos" id="O70489">
    <property type="glycosylation" value="5 sites, No reported glycans"/>
</dbReference>
<dbReference type="GlyGen" id="O70489">
    <property type="glycosylation" value="5 sites"/>
</dbReference>
<dbReference type="PhosphoSitePlus" id="O70489"/>
<dbReference type="jPOST" id="O70489"/>
<dbReference type="PaxDb" id="10116-ENSRNOP00000000497"/>
<dbReference type="Ensembl" id="ENSRNOT00000080476.2">
    <molecule id="O70489-1"/>
    <property type="protein sequence ID" value="ENSRNOP00000074687.2"/>
    <property type="gene ID" value="ENSRNOG00000000435.8"/>
</dbReference>
<dbReference type="GeneID" id="54398"/>
<dbReference type="KEGG" id="rno:54398"/>
<dbReference type="UCSC" id="RGD:620375">
    <molecule id="O70489-1"/>
    <property type="organism name" value="rat"/>
</dbReference>
<dbReference type="AGR" id="RGD:620375"/>
<dbReference type="CTD" id="9374"/>
<dbReference type="RGD" id="620375">
    <property type="gene designation" value="Ppt2"/>
</dbReference>
<dbReference type="eggNOG" id="KOG2541">
    <property type="taxonomic scope" value="Eukaryota"/>
</dbReference>
<dbReference type="GeneTree" id="ENSGT00940000155779"/>
<dbReference type="HOGENOM" id="CLU_050129_1_0_1"/>
<dbReference type="InParanoid" id="O70489"/>
<dbReference type="OMA" id="HHSDLYL"/>
<dbReference type="PhylomeDB" id="O70489"/>
<dbReference type="TreeFam" id="TF323926"/>
<dbReference type="Reactome" id="R-RNO-75105">
    <property type="pathway name" value="Fatty acyl-CoA biosynthesis"/>
</dbReference>
<dbReference type="PRO" id="PR:O70489"/>
<dbReference type="Proteomes" id="UP000002494">
    <property type="component" value="Chromosome 20"/>
</dbReference>
<dbReference type="Bgee" id="ENSRNOG00000000435">
    <property type="expression patterns" value="Expressed in thymus and 18 other cell types or tissues"/>
</dbReference>
<dbReference type="ExpressionAtlas" id="O70489">
    <property type="expression patterns" value="baseline and differential"/>
</dbReference>
<dbReference type="GO" id="GO:0005576">
    <property type="term" value="C:extracellular region"/>
    <property type="evidence" value="ECO:0000318"/>
    <property type="project" value="GO_Central"/>
</dbReference>
<dbReference type="GO" id="GO:0005764">
    <property type="term" value="C:lysosome"/>
    <property type="evidence" value="ECO:0000318"/>
    <property type="project" value="GO_Central"/>
</dbReference>
<dbReference type="GO" id="GO:0047617">
    <property type="term" value="F:fatty acyl-CoA hydrolase activity"/>
    <property type="evidence" value="ECO:0000250"/>
    <property type="project" value="UniProtKB"/>
</dbReference>
<dbReference type="GO" id="GO:0098599">
    <property type="term" value="F:palmitoyl hydrolase activity"/>
    <property type="evidence" value="ECO:0000250"/>
    <property type="project" value="UniProtKB"/>
</dbReference>
<dbReference type="GO" id="GO:0008474">
    <property type="term" value="F:palmitoyl-(protein) hydrolase activity"/>
    <property type="evidence" value="ECO:0000318"/>
    <property type="project" value="GO_Central"/>
</dbReference>
<dbReference type="GO" id="GO:0016790">
    <property type="term" value="F:thiolester hydrolase activity"/>
    <property type="evidence" value="ECO:0000250"/>
    <property type="project" value="UniProtKB"/>
</dbReference>
<dbReference type="FunFam" id="3.40.50.1820:FF:000037">
    <property type="entry name" value="Lysosomal thioesterase PPT2 homolog"/>
    <property type="match status" value="1"/>
</dbReference>
<dbReference type="Gene3D" id="3.40.50.1820">
    <property type="entry name" value="alpha/beta hydrolase"/>
    <property type="match status" value="1"/>
</dbReference>
<dbReference type="InterPro" id="IPR029058">
    <property type="entry name" value="AB_hydrolase_fold"/>
</dbReference>
<dbReference type="InterPro" id="IPR002472">
    <property type="entry name" value="Palm_thioest"/>
</dbReference>
<dbReference type="PANTHER" id="PTHR11247:SF27">
    <property type="entry name" value="LYSOSOMAL THIOESTERASE PPT2"/>
    <property type="match status" value="1"/>
</dbReference>
<dbReference type="PANTHER" id="PTHR11247">
    <property type="entry name" value="PALMITOYL-PROTEIN THIOESTERASE/DOLICHYLDIPHOSPHATASE 1"/>
    <property type="match status" value="1"/>
</dbReference>
<dbReference type="Pfam" id="PF02089">
    <property type="entry name" value="Palm_thioest"/>
    <property type="match status" value="1"/>
</dbReference>
<dbReference type="PRINTS" id="PR00414">
    <property type="entry name" value="PPTHIESTRASE"/>
</dbReference>
<dbReference type="SUPFAM" id="SSF53474">
    <property type="entry name" value="alpha/beta-Hydrolases"/>
    <property type="match status" value="1"/>
</dbReference>
<feature type="signal peptide" evidence="2">
    <location>
        <begin position="1"/>
        <end position="27"/>
    </location>
</feature>
<feature type="chain" id="PRO_0000025556" description="Lysosomal thioesterase PPT2">
    <location>
        <begin position="28"/>
        <end position="302"/>
    </location>
</feature>
<feature type="active site" description="Nucleophile" evidence="1">
    <location>
        <position position="111"/>
    </location>
</feature>
<feature type="active site" evidence="1">
    <location>
        <position position="228"/>
    </location>
</feature>
<feature type="active site" evidence="1">
    <location>
        <position position="283"/>
    </location>
</feature>
<feature type="glycosylation site" description="N-linked (GlcNAc...) asparagine" evidence="2">
    <location>
        <position position="60"/>
    </location>
</feature>
<feature type="glycosylation site" description="N-linked (GlcNAc...) asparagine" evidence="2">
    <location>
        <position position="190"/>
    </location>
</feature>
<feature type="glycosylation site" description="N-linked (GlcNAc...) asparagine" evidence="2">
    <location>
        <position position="206"/>
    </location>
</feature>
<feature type="glycosylation site" description="N-linked (GlcNAc...) asparagine" evidence="2">
    <location>
        <position position="245"/>
    </location>
</feature>
<feature type="glycosylation site" description="N-linked (GlcNAc...) asparagine" evidence="2">
    <location>
        <position position="289"/>
    </location>
</feature>
<feature type="disulfide bond" evidence="1">
    <location>
        <begin position="109"/>
        <end position="117"/>
    </location>
</feature>
<feature type="disulfide bond" evidence="1">
    <location>
        <begin position="165"/>
        <end position="176"/>
    </location>
</feature>
<feature type="disulfide bond" evidence="1">
    <location>
        <begin position="276"/>
        <end position="296"/>
    </location>
</feature>
<feature type="splice variant" id="VSP_005189" description="In isoform 2." evidence="3">
    <original>TSMR</original>
    <variation>FCHG</variation>
    <location>
        <begin position="155"/>
        <end position="158"/>
    </location>
</feature>
<feature type="splice variant" id="VSP_005190" description="In isoform 2." evidence="3">
    <location>
        <begin position="159"/>
        <end position="302"/>
    </location>
</feature>
<sequence length="302" mass="34355">MPGLWRQRLPSAWALLLLPFLPLLLPAAPAPHRGSYKPVIVVHGLFDSSYSFRHLLDYINETHPGTVVTVLDLFDGRESLRPLWEQVQGFREAVVPIMEKAPEGVHLICYSQGGLVCRALLSVMDEHNVDSFISLSSPQMGQYGDTDYLKWLFPTSMRSNLYRICYSPWGQEFSICNYWHDPHHDDLYLNASSFLALINGERDHPNATAWRKNFLRVGRLVLIGGPDDGVITPWQSSFFGFYDANETVLEMEEQPVYLRDSFGLKTLLARGAIVRCPMAGVSHTTWHSNRTLYDACIEPWLS</sequence>
<evidence type="ECO:0000250" key="1">
    <source>
        <dbReference type="UniProtKB" id="Q9UMR5"/>
    </source>
</evidence>
<evidence type="ECO:0000255" key="2"/>
<evidence type="ECO:0000303" key="3">
    <source ref="1"/>
</evidence>
<evidence type="ECO:0000305" key="4"/>
<comment type="function">
    <text evidence="1">Catalyzes the cleavage of thioester bonds from S-palmitoyl-CoA or S-palmitoyl-N-acetylcysteamine (unbranched structures) but does not have activity against palmitoylcysteine or palmitoylated proteins, branched structures or bulky head groups. Conversely, hydrolyzes both long and short chain fatty acyl-CoA substrate.</text>
</comment>
<comment type="catalytic activity">
    <reaction evidence="1">
        <text>hexadecanoyl-CoA + H2O = hexadecanoate + CoA + H(+)</text>
        <dbReference type="Rhea" id="RHEA:16645"/>
        <dbReference type="ChEBI" id="CHEBI:7896"/>
        <dbReference type="ChEBI" id="CHEBI:15377"/>
        <dbReference type="ChEBI" id="CHEBI:15378"/>
        <dbReference type="ChEBI" id="CHEBI:57287"/>
        <dbReference type="ChEBI" id="CHEBI:57379"/>
        <dbReference type="EC" id="3.1.2.2"/>
    </reaction>
</comment>
<comment type="catalytic activity">
    <reaction evidence="1">
        <text>S-hexadecanoyl-N-acetylcysteamine + H2O = N-acetylcysteamine + hexadecanoate + H(+)</text>
        <dbReference type="Rhea" id="RHEA:84099"/>
        <dbReference type="ChEBI" id="CHEBI:7896"/>
        <dbReference type="ChEBI" id="CHEBI:15377"/>
        <dbReference type="ChEBI" id="CHEBI:15378"/>
        <dbReference type="ChEBI" id="CHEBI:74410"/>
        <dbReference type="ChEBI" id="CHEBI:233601"/>
    </reaction>
</comment>
<comment type="subcellular location">
    <subcellularLocation>
        <location evidence="1">Lysosome</location>
    </subcellularLocation>
</comment>
<comment type="alternative products">
    <event type="alternative splicing"/>
    <isoform>
        <id>O70489-1</id>
        <name>1</name>
        <sequence type="displayed"/>
    </isoform>
    <isoform>
        <id>O70489-2</id>
        <name>2</name>
        <name>Truncated</name>
        <sequence type="described" ref="VSP_005189 VSP_005190"/>
    </isoform>
</comment>
<comment type="similarity">
    <text evidence="4">Belongs to the palmitoyl-protein thioesterase family.</text>
</comment>
<reference key="1">
    <citation type="submission" date="1998-05" db="EMBL/GenBank/DDBJ databases">
        <authorList>
            <person name="Kuznetsov S.R."/>
            <person name="Jones T.L.Z."/>
        </authorList>
    </citation>
    <scope>NUCLEOTIDE SEQUENCE [MRNA] (ISOFORMS 1 AND 2)</scope>
    <source>
        <tissue>Brain</tissue>
    </source>
</reference>
<reference key="2">
    <citation type="journal article" date="2004" name="Genome Res.">
        <title>The genomic sequence and comparative analysis of the rat major histocompatibility complex.</title>
        <authorList>
            <person name="Hurt P."/>
            <person name="Walter L."/>
            <person name="Sudbrak R."/>
            <person name="Klages S."/>
            <person name="Mueller I."/>
            <person name="Shiina T."/>
            <person name="Inoko H."/>
            <person name="Lehrach H."/>
            <person name="Guenther E."/>
            <person name="Reinhardt R."/>
            <person name="Himmelbauer H."/>
        </authorList>
    </citation>
    <scope>NUCLEOTIDE SEQUENCE [LARGE SCALE GENOMIC DNA]</scope>
    <source>
        <strain>Brown Norway</strain>
    </source>
</reference>
<reference key="3">
    <citation type="journal article" date="2004" name="Genome Res.">
        <title>The status, quality, and expansion of the NIH full-length cDNA project: the Mammalian Gene Collection (MGC).</title>
        <authorList>
            <consortium name="The MGC Project Team"/>
        </authorList>
    </citation>
    <scope>NUCLEOTIDE SEQUENCE [LARGE SCALE MRNA] (ISOFORM 1)</scope>
    <source>
        <tissue>Prostate</tissue>
    </source>
</reference>
<keyword id="KW-0025">Alternative splicing</keyword>
<keyword id="KW-1015">Disulfide bond</keyword>
<keyword id="KW-0325">Glycoprotein</keyword>
<keyword id="KW-0378">Hydrolase</keyword>
<keyword id="KW-0458">Lysosome</keyword>
<keyword id="KW-1185">Reference proteome</keyword>
<keyword id="KW-0732">Signal</keyword>
<organism>
    <name type="scientific">Rattus norvegicus</name>
    <name type="common">Rat</name>
    <dbReference type="NCBI Taxonomy" id="10116"/>
    <lineage>
        <taxon>Eukaryota</taxon>
        <taxon>Metazoa</taxon>
        <taxon>Chordata</taxon>
        <taxon>Craniata</taxon>
        <taxon>Vertebrata</taxon>
        <taxon>Euteleostomi</taxon>
        <taxon>Mammalia</taxon>
        <taxon>Eutheria</taxon>
        <taxon>Euarchontoglires</taxon>
        <taxon>Glires</taxon>
        <taxon>Rodentia</taxon>
        <taxon>Myomorpha</taxon>
        <taxon>Muroidea</taxon>
        <taxon>Muridae</taxon>
        <taxon>Murinae</taxon>
        <taxon>Rattus</taxon>
    </lineage>
</organism>
<protein>
    <recommendedName>
        <fullName>Lysosomal thioesterase PPT2</fullName>
        <shortName>PPT-2</shortName>
        <ecNumber evidence="1">3.1.2.2</ecNumber>
    </recommendedName>
</protein>
<gene>
    <name type="primary">Ppt2</name>
</gene>
<accession>O70489</accession>
<accession>O88500</accession>